<evidence type="ECO:0000250" key="1">
    <source>
        <dbReference type="UniProtKB" id="Q99623"/>
    </source>
</evidence>
<evidence type="ECO:0000255" key="2"/>
<evidence type="ECO:0000269" key="3">
    <source>
    </source>
</evidence>
<evidence type="ECO:0000269" key="4">
    <source>
    </source>
</evidence>
<evidence type="ECO:0000269" key="5">
    <source>
    </source>
</evidence>
<evidence type="ECO:0000269" key="6">
    <source>
    </source>
</evidence>
<evidence type="ECO:0000269" key="7">
    <source>
    </source>
</evidence>
<evidence type="ECO:0000269" key="8">
    <source>
    </source>
</evidence>
<evidence type="ECO:0000269" key="9">
    <source>
    </source>
</evidence>
<evidence type="ECO:0000269" key="10">
    <source>
    </source>
</evidence>
<evidence type="ECO:0000269" key="11">
    <source>
    </source>
</evidence>
<evidence type="ECO:0000269" key="12">
    <source>
    </source>
</evidence>
<evidence type="ECO:0000269" key="13">
    <source>
    </source>
</evidence>
<evidence type="ECO:0000305" key="14"/>
<evidence type="ECO:0000312" key="15">
    <source>
        <dbReference type="EMBL" id="AAC36005.1"/>
    </source>
</evidence>
<evidence type="ECO:0000312" key="16">
    <source>
        <dbReference type="EMBL" id="AAP47231.1"/>
    </source>
</evidence>
<evidence type="ECO:0000312" key="17">
    <source>
        <dbReference type="EMBL" id="AAP86652.1"/>
    </source>
</evidence>
<evidence type="ECO:0000312" key="18">
    <source>
        <dbReference type="MGI" id="MGI:102520"/>
    </source>
</evidence>
<evidence type="ECO:0007744" key="19">
    <source>
    </source>
</evidence>
<comment type="function">
    <text evidence="3 4 5 7 8 9 10 11">Protein with pleiotropic attributes mediated in a cell-compartment- and tissue-specific manner, which include the plasma membrane-associated cell signaling functions, mitochondrial chaperone, and transcriptional co-regulator of transcription factors and sex steroid hormones in the nucleus.</text>
</comment>
<comment type="function">
    <text evidence="3 7 10 11 12 14">In the mitochondria, together with PHB, forms large ring complexes (prohibitin complexes) in the inner mitochondrial membrane (IMM) and functions as a chaperone protein that stabilizes mitochondrial respiratory enzymes and maintains mitochondrial integrity in the IMM, which is required for mitochondrial morphogenesis, neuronal survival, and normal lifespan (Probable). The prohibitin complex, with DNAJC19, regulates cardiolipin remodeling and the protein turnover of OMA1 in a cardiolipin-binding manner (PubMed:31819158). Also regulates cytochrome-c oxidase assembly (COX) and mitochondrial respiration. Binding to sphingoid 1-phosphate (SPP) modulates its regulator activity (PubMed:11302691, PubMed:20959514). Has a key role of mitophagy receptor involved in targeting mitochondria for autophagic degradation (PubMed:28017329). Involved in mitochondrial-mediated antiviral innate immunity, activates RIG-I-mediated signal transduction and production of IFNB1 and pro-inflammatory cytokine IL6 (PubMed:31522117).</text>
</comment>
<comment type="function">
    <text evidence="4 5 14">In the nucleus, serves as transcriptional co-regulator (Probable). Acts as a mediator of transcriptional repression by nuclear hormone receptors via recruitment of histone deacetylases. Functions as an estrogen receptor (ER)-selective coregulator that potentiates the inhibitory activities of antiestrogens and represses the activity of estrogens. Competes with NCOA1 for modulation of ER transcriptional activity (PubMed:12878603, PubMed:15140878).</text>
</comment>
<comment type="function">
    <text evidence="1 8">In the plasma membrane, is involved in IGFBP6-induced cell migration (By similarity). Cooperates with CD86 to mediate CD86-signaling in B lymphocytes that regulates the level of IgG1 produced through the activation of distal signaling intermediates. Upon CD40 engagement, required to activate NF-kappa-B signaling pathway via phospholipase C and protein kinase C activation (PubMed:23241883).</text>
</comment>
<comment type="subunit">
    <text evidence="1 4 5 6 7 8 9 10 11">The mitochondrial prohibitin complex consists of two subunits (PHB1 and PHB2), assembled into a membrane-associated ring-shaped supercomplex of approximately 1 mDa (PubMed:20959514, PubMed:28017329, PubMed:31522117). Interacts with ESR1, HDAC1 and HDAC5 (PubMed:12878603, PubMed:15140878). Interacts with ZNF703 (By similarity). Interacts with STOML2 (By similarity). Interacts with ARFGEF3 (By similarity). Interacts with SPHK2 (PubMed:20959514). Interacts with COX4I1; the interaction associates PHB2 with COX (PubMed:20959514). Interacts with MAP1LC3B (membrane-bound form LC3-II); the interaction is direct and upon mitochondrial depolarization and proteasome-dependent outer membrane rupture (By similarity). Interacts with IGFBP6 (via C-terminal domain) (By similarity). Interacts with CLPB (By similarity). Interacts with CD86 (via cytoplasmic domain); the interactions increases after priming with CD40 (PubMed:23241883). Interacts with AFG3L2 (PubMed:24856930). Interacts with DNAJC19 (PubMed:24856930). Interacts with AKT2; this interaction may be important for myogenic differentiation (PubMed:17565718).</text>
</comment>
<comment type="interaction">
    <interactant intactId="EBI-445002">
        <id>O35129</id>
    </interactant>
    <interactant intactId="EBI-298507">
        <id>P67778</id>
        <label>Phb1</label>
    </interactant>
    <organismsDiffer>false</organismsDiffer>
    <experiments>3</experiments>
</comment>
<comment type="subcellular location">
    <subcellularLocation>
        <location evidence="3 7 9">Mitochondrion inner membrane</location>
    </subcellularLocation>
    <subcellularLocation>
        <location evidence="5">Cytoplasm</location>
    </subcellularLocation>
    <subcellularLocation>
        <location evidence="5 7">Nucleus</location>
    </subcellularLocation>
    <subcellularLocation>
        <location evidence="1">Cell membrane</location>
    </subcellularLocation>
</comment>
<comment type="tissue specificity">
    <text evidence="3 5 13">Widely expressed in different tissues.</text>
</comment>
<comment type="developmental stage">
    <text evidence="3">Throughout gestation, highly expressed in brown fat, heart, liver, developing renal tubules and neurons, and detected at lower levels in tissues such as lung and exocrine pancreas.</text>
</comment>
<comment type="induction">
    <text evidence="8">In B cells, expression is increased by CD40 engagement (at protein level).</text>
</comment>
<comment type="domain">
    <text evidence="1">LC3-interaction region (LIR) is required for interaction with MAP1LC3B/LC3-II and for Parkin-mediated mitophagy.</text>
</comment>
<comment type="PTM">
    <text evidence="1">Phosphorylated. Tyrosine phosphorylation is indirectly stimulated by IGFBP6.</text>
</comment>
<comment type="similarity">
    <text evidence="2">Belongs to the prohibitin family.</text>
</comment>
<proteinExistence type="evidence at protein level"/>
<gene>
    <name evidence="18" type="primary">Phb2</name>
    <name evidence="15" type="synonym">Bap</name>
    <name evidence="16 18" type="synonym">Bcap37</name>
    <name evidence="17" type="synonym">Rea</name>
</gene>
<accession>O35129</accession>
<accession>O89075</accession>
<accession>Q61336</accession>
<reference key="1">
    <citation type="journal article" date="1994" name="EMBO J.">
        <title>The IgM antigen receptor of B lymphocytes is associated with prohibitin and a prohibitin-related protein.</title>
        <authorList>
            <person name="Terashima M."/>
            <person name="Kim K.-M."/>
            <person name="Adachi T."/>
            <person name="Nielsen P.J."/>
            <person name="Reth M."/>
            <person name="Koehler G."/>
            <person name="Lamers M.C."/>
        </authorList>
    </citation>
    <scope>NUCLEOTIDE SEQUENCE [MRNA]</scope>
    <scope>TISSUE SPECIFICITY</scope>
    <source>
        <strain>BALB/cJ</strain>
        <tissue>Lymphoid tissue</tissue>
    </source>
</reference>
<reference key="2">
    <citation type="journal article" date="2003" name="J. Biol. Chem.">
        <title>Truncated estrogen receptor product-1 stimulates estrogen receptor alpha transcriptional activity by titration of repressor proteins.</title>
        <authorList>
            <person name="Lin V.Y."/>
            <person name="Resnick E.M."/>
            <person name="Shupnik M.A."/>
        </authorList>
    </citation>
    <scope>NUCLEOTIDE SEQUENCE [MRNA]</scope>
    <scope>FUNCTION</scope>
    <scope>INTERACTION WITH ESR1</scope>
    <source>
        <strain>129/SvJ</strain>
        <tissue>Pituitary</tissue>
    </source>
</reference>
<reference key="3">
    <citation type="journal article" date="2004" name="J. Biol. Chem.">
        <title>Transcriptional regulation by the repressor of estrogen receptor activity via recruitment of histone deacetylases.</title>
        <authorList>
            <person name="Kurtev V."/>
            <person name="Margueron R."/>
            <person name="Kroboth K."/>
            <person name="Ogris E."/>
            <person name="Cavailles V."/>
            <person name="Seiser C."/>
        </authorList>
    </citation>
    <scope>NUCLEOTIDE SEQUENCE [MRNA]</scope>
    <scope>FUNCTION</scope>
    <scope>INTERACTION WITH ESR1; HDAC1 AND HDAC5</scope>
    <scope>SUBCELLULAR LOCATION</scope>
    <scope>TISSUE SPECIFICITY</scope>
    <source>
        <strain>BALB/cJ</strain>
        <tissue>Brain</tissue>
    </source>
</reference>
<reference key="4">
    <citation type="journal article" date="1998" name="Genome Res.">
        <title>Comparative sequence analysis of a gene-rich cluster at human chromosome 12p13 and its syntenic region in mouse chromosome 6.</title>
        <authorList>
            <person name="Ansari-Lari M.A."/>
            <person name="Oeltjen J.C."/>
            <person name="Schwartz S."/>
            <person name="Zhang Z."/>
            <person name="Muzny D.M."/>
            <person name="Lu J."/>
            <person name="Gorrell J.H."/>
            <person name="Chinault A.C."/>
            <person name="Belmont J.W."/>
            <person name="Miller W."/>
            <person name="Gibbs R.A."/>
        </authorList>
    </citation>
    <scope>NUCLEOTIDE SEQUENCE [LARGE SCALE GENOMIC DNA]</scope>
</reference>
<reference key="5">
    <citation type="submission" date="2007-04" db="UniProtKB">
        <authorList>
            <person name="Lubec G."/>
            <person name="Kang S.U."/>
        </authorList>
    </citation>
    <scope>PROTEIN SEQUENCE OF 25-48; 55-71; 98-142; 148-165; 335-346; 866-885 AND 1051-1058</scope>
    <scope>IDENTIFICATION BY MASS SPECTROMETRY</scope>
    <source>
        <strain>C57BL/6J</strain>
        <tissue>Brain</tissue>
    </source>
</reference>
<reference key="6">
    <citation type="journal article" date="1998" name="Mol. Immunol.">
        <title>Expressed genes in interleukin-4 treated B cells identified by cDNA representational difference analysis.</title>
        <authorList>
            <person name="Chu C.C."/>
            <person name="Paul W.E."/>
        </authorList>
    </citation>
    <scope>NUCLEOTIDE SEQUENCE [MRNA] OF 73-154</scope>
    <source>
        <strain>BALB/cJ</strain>
        <tissue>Spleen</tissue>
    </source>
</reference>
<reference key="7">
    <citation type="journal article" date="2001" name="Exp. Cell Res.">
        <title>Mammalian prohibitin proteins respond to mitochondrial stress and decrease during cellular senescence.</title>
        <authorList>
            <person name="Coates P.J."/>
            <person name="Nenutil R."/>
            <person name="McGregor A."/>
            <person name="Picksley S.M."/>
            <person name="Crouch D.H."/>
            <person name="Hall P.A."/>
            <person name="Wright E.G."/>
        </authorList>
    </citation>
    <scope>INTERACTION WITH PHB</scope>
    <scope>SUBCELLULAR LOCATION</scope>
    <scope>TISSUE SPECIFICITY</scope>
    <scope>DEVELOPMENTAL STAGE</scope>
</reference>
<reference key="8">
    <citation type="journal article" date="2008" name="J. Cell. Physiol.">
        <title>Akt2 is implicated in skeletal muscle differentiation and specifically binds Prohibitin2/REA.</title>
        <authorList>
            <person name="Heron-Milhavet L."/>
            <person name="Mamaeva D."/>
            <person name="Rochat A."/>
            <person name="Lamb N.J."/>
            <person name="Fernandez A."/>
        </authorList>
    </citation>
    <scope>INTERACTION WITH AKT2</scope>
</reference>
<reference key="9">
    <citation type="journal article" date="2010" name="Cell">
        <title>A tissue-specific atlas of mouse protein phosphorylation and expression.</title>
        <authorList>
            <person name="Huttlin E.L."/>
            <person name="Jedrychowski M.P."/>
            <person name="Elias J.E."/>
            <person name="Goswami T."/>
            <person name="Rad R."/>
            <person name="Beausoleil S.A."/>
            <person name="Villen J."/>
            <person name="Haas W."/>
            <person name="Sowa M.E."/>
            <person name="Gygi S.P."/>
        </authorList>
    </citation>
    <scope>IDENTIFICATION BY MASS SPECTROMETRY [LARGE SCALE ANALYSIS]</scope>
    <source>
        <tissue>Brain</tissue>
        <tissue>Brown adipose tissue</tissue>
        <tissue>Heart</tissue>
        <tissue>Kidney</tissue>
        <tissue>Liver</tissue>
        <tissue>Lung</tissue>
        <tissue>Pancreas</tissue>
        <tissue>Spleen</tissue>
        <tissue>Testis</tissue>
    </source>
</reference>
<reference key="10">
    <citation type="journal article" date="2011" name="FASEB J.">
        <title>Sphingosine-1-phosphate produced by sphingosine kinase 2 in mitochondria interacts with prohibitin 2 to regulate complex IV assembly and respiration.</title>
        <authorList>
            <person name="Strub G.M."/>
            <person name="Paillard M."/>
            <person name="Liang J."/>
            <person name="Gomez L."/>
            <person name="Allegood J.C."/>
            <person name="Hait N.C."/>
            <person name="Maceyka M."/>
            <person name="Price M.M."/>
            <person name="Chen Q."/>
            <person name="Simpson D.C."/>
            <person name="Kordula T."/>
            <person name="Milstien S."/>
            <person name="Lesnefsky E.J."/>
            <person name="Spiegel S."/>
        </authorList>
    </citation>
    <scope>FUNCTION</scope>
    <scope>SUBCELLULAR LOCATION</scope>
    <scope>INTERACTION WITH SPHK2 AND COX4I1</scope>
</reference>
<reference key="11">
    <citation type="journal article" date="2013" name="J. Immunol.">
        <title>Prohibitins and the cytoplasmic domain of CD86 cooperate to mediate CD86 signaling in B lymphocytes.</title>
        <authorList>
            <person name="Lucas C.R."/>
            <person name="Cordero-Nieves H.M."/>
            <person name="Erbe R.S."/>
            <person name="McAlees J.W."/>
            <person name="Bhatia S."/>
            <person name="Hodes R.J."/>
            <person name="Campbell K.S."/>
            <person name="Sanders V.M."/>
        </authorList>
    </citation>
    <scope>FUNCTION</scope>
    <scope>INTERACTION WITH CD86</scope>
    <scope>INDUCTION BY CD40</scope>
</reference>
<reference key="12">
    <citation type="journal article" date="2013" name="Proc. Natl. Acad. Sci. U.S.A.">
        <title>Label-free quantitative proteomics of the lysine acetylome in mitochondria identifies substrates of SIRT3 in metabolic pathways.</title>
        <authorList>
            <person name="Rardin M.J."/>
            <person name="Newman J.C."/>
            <person name="Held J.M."/>
            <person name="Cusack M.P."/>
            <person name="Sorensen D.J."/>
            <person name="Li B."/>
            <person name="Schilling B."/>
            <person name="Mooney S.D."/>
            <person name="Kahn C.R."/>
            <person name="Verdin E."/>
            <person name="Gibson B.W."/>
        </authorList>
    </citation>
    <scope>ACETYLATION [LARGE SCALE ANALYSIS] AT LYS-147; LYS-200; LYS-236 AND LYS-262</scope>
    <scope>IDENTIFICATION BY MASS SPECTROMETRY [LARGE SCALE ANALYSIS]</scope>
    <source>
        <tissue>Liver</tissue>
    </source>
</reference>
<reference key="13">
    <citation type="journal article" date="2014" name="Cell Metab.">
        <title>DNAJC19, a mitochondrial cochaperone associated with cardiomyopathy, forms a complex with prohibitins to regulate cardiolipin remodeling.</title>
        <authorList>
            <person name="Richter-Dennerlein R."/>
            <person name="Korwitz A."/>
            <person name="Haag M."/>
            <person name="Tatsuta T."/>
            <person name="Dargazanli S."/>
            <person name="Baker M."/>
            <person name="Decker T."/>
            <person name="Lamkemeyer T."/>
            <person name="Rugarli E.I."/>
            <person name="Langer T."/>
        </authorList>
    </citation>
    <scope>FUNCTION</scope>
    <scope>INTERACTION WITH DNAJC19; PHB1 AND AFG3L2</scope>
    <scope>SUBCELLULAR LOCATION</scope>
</reference>
<reference key="14">
    <citation type="journal article" date="2017" name="Cell">
        <title>Prohibitin 2 Is an Inner Mitochondrial Membrane Mitophagy Receptor.</title>
        <authorList>
            <person name="Wei Y."/>
            <person name="Chiang W.C."/>
            <person name="Sumpter R. Jr."/>
            <person name="Mishra P."/>
            <person name="Levine B."/>
        </authorList>
    </citation>
    <scope>FUNCTION</scope>
    <scope>INTERACTION WITH PHB</scope>
</reference>
<reference key="15">
    <citation type="journal article" date="2020" name="Cell Death Differ.">
        <title>Prohibitin levels regulate OMA1 activity and turnover in neurons.</title>
        <authorList>
            <person name="Anderson C.J."/>
            <person name="Kahl A."/>
            <person name="Fruitman H."/>
            <person name="Qian L."/>
            <person name="Zhou P."/>
            <person name="Manfredi G."/>
            <person name="Iadecola C."/>
        </authorList>
    </citation>
    <scope>FUNCTION</scope>
</reference>
<reference key="16">
    <citation type="journal article" date="2019" name="IScience">
        <title>Structural Basis of Mitochondrial Scaffolds by Prohibitin Complexes: Insight into a Role of the Coiled-Coil Region.</title>
        <authorList>
            <person name="Yoshinaka T."/>
            <person name="Kosako H."/>
            <person name="Yoshizumi T."/>
            <person name="Furukawa R."/>
            <person name="Hirano Y."/>
            <person name="Kuge O."/>
            <person name="Tamada T."/>
            <person name="Koshiba T."/>
        </authorList>
    </citation>
    <scope>FUNCTION</scope>
</reference>
<protein>
    <recommendedName>
        <fullName evidence="14">Prohibitin-2</fullName>
    </recommendedName>
    <alternativeName>
        <fullName>B-cell receptor-associated protein BAP37</fullName>
    </alternativeName>
    <alternativeName>
        <fullName>Repressor of estrogen receptor activity</fullName>
    </alternativeName>
</protein>
<sequence>MAQNLKDLAGRLPAGPRGMGTALKLLLGAGAVAYGVRESVFTVEGGHRAIFFNRIGGVQQDTILAEGLHFRIPWFQYPIIYDIRARPRKISSPTGSKDLQMVNISLRVLSRPNAQELPSMYQRLGLDYEERVLPSIVNEVLKSVVAKFNASQLITQRAQVSLLIRRELTERAKDFSLILDDVAITELSFSREYTAAVEAKQVAQQEAQRAQFLVEKAKQEQRQKIVQAEGEAEAAKMLGEALSKNPGYIKLRKIRAAQNISKTIATSQNRIYLTADNLVLNLQDESFTRGSDSLIKGKK</sequence>
<organism>
    <name type="scientific">Mus musculus</name>
    <name type="common">Mouse</name>
    <dbReference type="NCBI Taxonomy" id="10090"/>
    <lineage>
        <taxon>Eukaryota</taxon>
        <taxon>Metazoa</taxon>
        <taxon>Chordata</taxon>
        <taxon>Craniata</taxon>
        <taxon>Vertebrata</taxon>
        <taxon>Euteleostomi</taxon>
        <taxon>Mammalia</taxon>
        <taxon>Eutheria</taxon>
        <taxon>Euarchontoglires</taxon>
        <taxon>Glires</taxon>
        <taxon>Rodentia</taxon>
        <taxon>Myomorpha</taxon>
        <taxon>Muroidea</taxon>
        <taxon>Muridae</taxon>
        <taxon>Murinae</taxon>
        <taxon>Mus</taxon>
        <taxon>Mus</taxon>
    </lineage>
</organism>
<keyword id="KW-0007">Acetylation</keyword>
<keyword id="KW-1003">Cell membrane</keyword>
<keyword id="KW-0175">Coiled coil</keyword>
<keyword id="KW-0963">Cytoplasm</keyword>
<keyword id="KW-0903">Direct protein sequencing</keyword>
<keyword id="KW-0472">Membrane</keyword>
<keyword id="KW-0496">Mitochondrion</keyword>
<keyword id="KW-0999">Mitochondrion inner membrane</keyword>
<keyword id="KW-0539">Nucleus</keyword>
<keyword id="KW-0597">Phosphoprotein</keyword>
<keyword id="KW-0675">Receptor</keyword>
<keyword id="KW-1185">Reference proteome</keyword>
<keyword id="KW-0678">Repressor</keyword>
<keyword id="KW-0804">Transcription</keyword>
<keyword id="KW-0805">Transcription regulation</keyword>
<feature type="initiator methionine" description="Removed" evidence="1">
    <location>
        <position position="1"/>
    </location>
</feature>
<feature type="chain" id="PRO_0000213885" description="Prohibitin-2">
    <location>
        <begin position="2"/>
        <end position="299"/>
    </location>
</feature>
<feature type="region of interest" description="Necessary for transcriptional repression" evidence="1">
    <location>
        <begin position="19"/>
        <end position="49"/>
    </location>
</feature>
<feature type="region of interest" description="Necessary for transcriptional repression" evidence="1">
    <location>
        <begin position="150"/>
        <end position="174"/>
    </location>
</feature>
<feature type="coiled-coil region" evidence="2">
    <location>
        <begin position="190"/>
        <end position="238"/>
    </location>
</feature>
<feature type="modified residue" description="N-acetylalanine" evidence="1">
    <location>
        <position position="2"/>
    </location>
</feature>
<feature type="modified residue" description="Phosphotyrosine" evidence="1">
    <location>
        <position position="128"/>
    </location>
</feature>
<feature type="modified residue" description="N6-acetyllysine" evidence="19">
    <location>
        <position position="147"/>
    </location>
</feature>
<feature type="modified residue" description="Phosphoserine" evidence="1">
    <location>
        <position position="151"/>
    </location>
</feature>
<feature type="modified residue" description="N6-acetyllysine" evidence="19">
    <location>
        <position position="200"/>
    </location>
</feature>
<feature type="modified residue" description="N6-acetyllysine" evidence="19">
    <location>
        <position position="236"/>
    </location>
</feature>
<feature type="modified residue" description="N6-acetyllysine" evidence="1">
    <location>
        <position position="250"/>
    </location>
</feature>
<feature type="modified residue" description="N6-acetyllysine" evidence="19">
    <location>
        <position position="262"/>
    </location>
</feature>
<feature type="sequence conflict" description="In Ref. 1; CAA55350." evidence="14" ref="1">
    <original>GL</original>
    <variation>F</variation>
    <location>
        <begin position="67"/>
        <end position="68"/>
    </location>
</feature>
<feature type="sequence conflict" description="In Ref. 6; AAC36528." evidence="14" ref="6">
    <original>Y</original>
    <variation>N</variation>
    <location>
        <position position="81"/>
    </location>
</feature>
<feature type="sequence conflict" description="In Ref. 6; AAC36528." evidence="14" ref="6">
    <original>P</original>
    <variation>L</variation>
    <location>
        <position position="112"/>
    </location>
</feature>
<feature type="sequence conflict" description="In Ref. 6; AAC36528." evidence="14" ref="6">
    <original>M</original>
    <variation>I</variation>
    <location>
        <position position="120"/>
    </location>
</feature>
<feature type="sequence conflict" description="In Ref. 6; AAC36528." evidence="14" ref="6">
    <original>D</original>
    <variation>G</variation>
    <location>
        <position position="127"/>
    </location>
</feature>
<feature type="sequence conflict" description="In Ref. 6; AAC36528." evidence="14" ref="6">
    <original>N</original>
    <variation>S</variation>
    <location>
        <position position="138"/>
    </location>
</feature>
<feature type="sequence conflict" description="In Ref. 6; AAC36528." evidence="14" ref="6">
    <original>F</original>
    <variation>V</variation>
    <location>
        <position position="148"/>
    </location>
</feature>
<name>PHB2_MOUSE</name>
<dbReference type="EMBL" id="X78683">
    <property type="protein sequence ID" value="CAA55350.1"/>
    <property type="molecule type" value="mRNA"/>
</dbReference>
<dbReference type="EMBL" id="AY319418">
    <property type="protein sequence ID" value="AAP86652.1"/>
    <property type="molecule type" value="mRNA"/>
</dbReference>
<dbReference type="EMBL" id="AY211613">
    <property type="protein sequence ID" value="AAP47231.1"/>
    <property type="molecule type" value="mRNA"/>
</dbReference>
<dbReference type="EMBL" id="AC002397">
    <property type="protein sequence ID" value="AAC36005.1"/>
    <property type="molecule type" value="Genomic_DNA"/>
</dbReference>
<dbReference type="EMBL" id="U89422">
    <property type="protein sequence ID" value="AAC36528.1"/>
    <property type="molecule type" value="mRNA"/>
</dbReference>
<dbReference type="CCDS" id="CCDS39627.1"/>
<dbReference type="PIR" id="S46996">
    <property type="entry name" value="S46996"/>
</dbReference>
<dbReference type="RefSeq" id="NP_031557.2">
    <property type="nucleotide sequence ID" value="NM_007531.2"/>
</dbReference>
<dbReference type="SMR" id="O35129"/>
<dbReference type="BioGRID" id="198310">
    <property type="interactions" value="41"/>
</dbReference>
<dbReference type="ComplexPortal" id="CPX-5743">
    <property type="entry name" value="Prohibitin complex"/>
</dbReference>
<dbReference type="CORUM" id="O35129"/>
<dbReference type="FunCoup" id="O35129">
    <property type="interactions" value="2569"/>
</dbReference>
<dbReference type="IntAct" id="O35129">
    <property type="interactions" value="20"/>
</dbReference>
<dbReference type="MINT" id="O35129"/>
<dbReference type="STRING" id="10090.ENSMUSP00000004375"/>
<dbReference type="BindingDB" id="O35129"/>
<dbReference type="ChEMBL" id="CHEMBL4295659"/>
<dbReference type="GlyGen" id="O35129">
    <property type="glycosylation" value="3 sites, 2 N-linked glycans (2 sites), 1 O-linked glycan (1 site)"/>
</dbReference>
<dbReference type="iPTMnet" id="O35129"/>
<dbReference type="MetOSite" id="O35129"/>
<dbReference type="PhosphoSitePlus" id="O35129"/>
<dbReference type="SwissPalm" id="O35129"/>
<dbReference type="REPRODUCTION-2DPAGE" id="O35129"/>
<dbReference type="jPOST" id="O35129"/>
<dbReference type="PaxDb" id="10090-ENSMUSP00000004375"/>
<dbReference type="PeptideAtlas" id="O35129"/>
<dbReference type="ProteomicsDB" id="289488"/>
<dbReference type="Pumba" id="O35129"/>
<dbReference type="TopDownProteomics" id="O35129"/>
<dbReference type="Antibodypedia" id="4444">
    <property type="antibodies" value="470 antibodies from 39 providers"/>
</dbReference>
<dbReference type="DNASU" id="12034"/>
<dbReference type="Ensembl" id="ENSMUST00000004375.16">
    <property type="protein sequence ID" value="ENSMUSP00000004375.10"/>
    <property type="gene ID" value="ENSMUSG00000004264.18"/>
</dbReference>
<dbReference type="GeneID" id="12034"/>
<dbReference type="KEGG" id="mmu:12034"/>
<dbReference type="UCSC" id="uc033iuq.1">
    <property type="organism name" value="mouse"/>
</dbReference>
<dbReference type="AGR" id="MGI:102520"/>
<dbReference type="CTD" id="11331"/>
<dbReference type="MGI" id="MGI:102520">
    <property type="gene designation" value="Phb2"/>
</dbReference>
<dbReference type="VEuPathDB" id="HostDB:ENSMUSG00000004264"/>
<dbReference type="eggNOG" id="KOG3090">
    <property type="taxonomic scope" value="Eukaryota"/>
</dbReference>
<dbReference type="GeneTree" id="ENSGT00950000183070"/>
<dbReference type="HOGENOM" id="CLU_047969_0_2_1"/>
<dbReference type="InParanoid" id="O35129"/>
<dbReference type="OMA" id="NEGTHFQ"/>
<dbReference type="OrthoDB" id="275637at2759"/>
<dbReference type="PhylomeDB" id="O35129"/>
<dbReference type="TreeFam" id="TF354230"/>
<dbReference type="Reactome" id="R-MMU-8949664">
    <property type="pathway name" value="Processing of SMDT1"/>
</dbReference>
<dbReference type="Reactome" id="R-MMU-9840373">
    <property type="pathway name" value="Cellular response to mitochondrial stress"/>
</dbReference>
<dbReference type="BioGRID-ORCS" id="12034">
    <property type="hits" value="32 hits in 78 CRISPR screens"/>
</dbReference>
<dbReference type="CD-CODE" id="CE726F99">
    <property type="entry name" value="Postsynaptic density"/>
</dbReference>
<dbReference type="ChiTaRS" id="Phb2">
    <property type="organism name" value="mouse"/>
</dbReference>
<dbReference type="PRO" id="PR:O35129"/>
<dbReference type="Proteomes" id="UP000000589">
    <property type="component" value="Chromosome 6"/>
</dbReference>
<dbReference type="RNAct" id="O35129">
    <property type="molecule type" value="protein"/>
</dbReference>
<dbReference type="Bgee" id="ENSMUSG00000004264">
    <property type="expression patterns" value="Expressed in yolk sac and 194 other cell types or tissues"/>
</dbReference>
<dbReference type="ExpressionAtlas" id="O35129">
    <property type="expression patterns" value="baseline and differential"/>
</dbReference>
<dbReference type="GO" id="GO:0009986">
    <property type="term" value="C:cell surface"/>
    <property type="evidence" value="ECO:0000314"/>
    <property type="project" value="UniProtKB"/>
</dbReference>
<dbReference type="GO" id="GO:0098800">
    <property type="term" value="C:inner mitochondrial membrane protein complex"/>
    <property type="evidence" value="ECO:0000314"/>
    <property type="project" value="UniProtKB"/>
</dbReference>
<dbReference type="GO" id="GO:0005743">
    <property type="term" value="C:mitochondrial inner membrane"/>
    <property type="evidence" value="ECO:0000314"/>
    <property type="project" value="UniProtKB"/>
</dbReference>
<dbReference type="GO" id="GO:0005741">
    <property type="term" value="C:mitochondrial outer membrane"/>
    <property type="evidence" value="ECO:0007669"/>
    <property type="project" value="Ensembl"/>
</dbReference>
<dbReference type="GO" id="GO:0035632">
    <property type="term" value="C:mitochondrial prohibitin complex"/>
    <property type="evidence" value="ECO:0000353"/>
    <property type="project" value="ComplexPortal"/>
</dbReference>
<dbReference type="GO" id="GO:0005739">
    <property type="term" value="C:mitochondrion"/>
    <property type="evidence" value="ECO:0000314"/>
    <property type="project" value="UniProtKB"/>
</dbReference>
<dbReference type="GO" id="GO:0016363">
    <property type="term" value="C:nuclear matrix"/>
    <property type="evidence" value="ECO:0000250"/>
    <property type="project" value="UniProtKB"/>
</dbReference>
<dbReference type="GO" id="GO:0005634">
    <property type="term" value="C:nucleus"/>
    <property type="evidence" value="ECO:0000314"/>
    <property type="project" value="UniProtKB"/>
</dbReference>
<dbReference type="GO" id="GO:0005886">
    <property type="term" value="C:plasma membrane"/>
    <property type="evidence" value="ECO:0000250"/>
    <property type="project" value="UniProtKB"/>
</dbReference>
<dbReference type="GO" id="GO:0032991">
    <property type="term" value="C:protein-containing complex"/>
    <property type="evidence" value="ECO:0000250"/>
    <property type="project" value="UniProtKB"/>
</dbReference>
<dbReference type="GO" id="GO:0033218">
    <property type="term" value="F:amide binding"/>
    <property type="evidence" value="ECO:0007669"/>
    <property type="project" value="Ensembl"/>
</dbReference>
<dbReference type="GO" id="GO:0046982">
    <property type="term" value="F:protein heterodimerization activity"/>
    <property type="evidence" value="ECO:0007669"/>
    <property type="project" value="Ensembl"/>
</dbReference>
<dbReference type="GO" id="GO:0042803">
    <property type="term" value="F:protein homodimerization activity"/>
    <property type="evidence" value="ECO:0000250"/>
    <property type="project" value="UniProtKB"/>
</dbReference>
<dbReference type="GO" id="GO:0046625">
    <property type="term" value="F:sphingolipid binding"/>
    <property type="evidence" value="ECO:0000314"/>
    <property type="project" value="UniProtKB"/>
</dbReference>
<dbReference type="GO" id="GO:0140374">
    <property type="term" value="P:antiviral innate immune response"/>
    <property type="evidence" value="ECO:0007669"/>
    <property type="project" value="Ensembl"/>
</dbReference>
<dbReference type="GO" id="GO:0042113">
    <property type="term" value="P:B cell activation"/>
    <property type="evidence" value="ECO:0000314"/>
    <property type="project" value="UniProtKB"/>
</dbReference>
<dbReference type="GO" id="GO:0016477">
    <property type="term" value="P:cell migration"/>
    <property type="evidence" value="ECO:0000250"/>
    <property type="project" value="UniProtKB"/>
</dbReference>
<dbReference type="GO" id="GO:0030520">
    <property type="term" value="P:estrogen receptor signaling pathway"/>
    <property type="evidence" value="ECO:0000315"/>
    <property type="project" value="MGI"/>
</dbReference>
<dbReference type="GO" id="GO:0060749">
    <property type="term" value="P:mammary gland alveolus development"/>
    <property type="evidence" value="ECO:0000315"/>
    <property type="project" value="MGI"/>
</dbReference>
<dbReference type="GO" id="GO:0060744">
    <property type="term" value="P:mammary gland branching involved in thelarche"/>
    <property type="evidence" value="ECO:0000315"/>
    <property type="project" value="MGI"/>
</dbReference>
<dbReference type="GO" id="GO:0033598">
    <property type="term" value="P:mammary gland epithelial cell proliferation"/>
    <property type="evidence" value="ECO:0000315"/>
    <property type="project" value="MGI"/>
</dbReference>
<dbReference type="GO" id="GO:0007005">
    <property type="term" value="P:mitochondrion organization"/>
    <property type="evidence" value="ECO:0000303"/>
    <property type="project" value="ComplexPortal"/>
</dbReference>
<dbReference type="GO" id="GO:0000423">
    <property type="term" value="P:mitophagy"/>
    <property type="evidence" value="ECO:0000314"/>
    <property type="project" value="UniProtKB"/>
</dbReference>
<dbReference type="GO" id="GO:0043066">
    <property type="term" value="P:negative regulation of apoptotic process"/>
    <property type="evidence" value="ECO:0007669"/>
    <property type="project" value="Ensembl"/>
</dbReference>
<dbReference type="GO" id="GO:0045892">
    <property type="term" value="P:negative regulation of DNA-templated transcription"/>
    <property type="evidence" value="ECO:0000314"/>
    <property type="project" value="UniProtKB"/>
</dbReference>
<dbReference type="GO" id="GO:0033147">
    <property type="term" value="P:negative regulation of intracellular estrogen receptor signaling pathway"/>
    <property type="evidence" value="ECO:0000315"/>
    <property type="project" value="MGI"/>
</dbReference>
<dbReference type="GO" id="GO:0033600">
    <property type="term" value="P:negative regulation of mammary gland epithelial cell proliferation"/>
    <property type="evidence" value="ECO:0000315"/>
    <property type="project" value="MGI"/>
</dbReference>
<dbReference type="GO" id="GO:0002639">
    <property type="term" value="P:positive regulation of immunoglobulin production"/>
    <property type="evidence" value="ECO:0000314"/>
    <property type="project" value="UniProtKB"/>
</dbReference>
<dbReference type="GO" id="GO:1901224">
    <property type="term" value="P:positive regulation of non-canonical NF-kappaB signal transduction"/>
    <property type="evidence" value="ECO:0000314"/>
    <property type="project" value="UniProtKB"/>
</dbReference>
<dbReference type="GO" id="GO:0006606">
    <property type="term" value="P:protein import into nucleus"/>
    <property type="evidence" value="ECO:0007669"/>
    <property type="project" value="Ensembl"/>
</dbReference>
<dbReference type="GO" id="GO:0050821">
    <property type="term" value="P:protein stabilization"/>
    <property type="evidence" value="ECO:0000266"/>
    <property type="project" value="ComplexPortal"/>
</dbReference>
<dbReference type="GO" id="GO:0060762">
    <property type="term" value="P:regulation of branching involved in mammary gland duct morphogenesis"/>
    <property type="evidence" value="ECO:0000315"/>
    <property type="project" value="MGI"/>
</dbReference>
<dbReference type="GO" id="GO:1900208">
    <property type="term" value="P:regulation of cardiolipin metabolic process"/>
    <property type="evidence" value="ECO:0000315"/>
    <property type="project" value="UniProtKB"/>
</dbReference>
<dbReference type="GO" id="GO:1904959">
    <property type="term" value="P:regulation of cytochrome-c oxidase activity"/>
    <property type="evidence" value="ECO:0000315"/>
    <property type="project" value="UniProtKB"/>
</dbReference>
<dbReference type="GO" id="GO:0039529">
    <property type="term" value="P:RIG-I signaling pathway"/>
    <property type="evidence" value="ECO:0007669"/>
    <property type="project" value="Ensembl"/>
</dbReference>
<dbReference type="GO" id="GO:0007062">
    <property type="term" value="P:sister chromatid cohesion"/>
    <property type="evidence" value="ECO:0007669"/>
    <property type="project" value="Ensembl"/>
</dbReference>
<dbReference type="CDD" id="cd03401">
    <property type="entry name" value="SPFH_prohibitin"/>
    <property type="match status" value="1"/>
</dbReference>
<dbReference type="FunFam" id="3.30.479.30:FF:000001">
    <property type="entry name" value="Prohibitin 2"/>
    <property type="match status" value="1"/>
</dbReference>
<dbReference type="Gene3D" id="3.30.479.30">
    <property type="entry name" value="Band 7 domain"/>
    <property type="match status" value="1"/>
</dbReference>
<dbReference type="InterPro" id="IPR001107">
    <property type="entry name" value="Band_7"/>
</dbReference>
<dbReference type="InterPro" id="IPR036013">
    <property type="entry name" value="Band_7/SPFH_dom_sf"/>
</dbReference>
<dbReference type="InterPro" id="IPR000163">
    <property type="entry name" value="Prohibitin"/>
</dbReference>
<dbReference type="PANTHER" id="PTHR23222">
    <property type="entry name" value="PROHIBITIN"/>
    <property type="match status" value="1"/>
</dbReference>
<dbReference type="PANTHER" id="PTHR23222:SF1">
    <property type="entry name" value="PROHIBITIN-2"/>
    <property type="match status" value="1"/>
</dbReference>
<dbReference type="Pfam" id="PF01145">
    <property type="entry name" value="Band_7"/>
    <property type="match status" value="1"/>
</dbReference>
<dbReference type="PRINTS" id="PR00679">
    <property type="entry name" value="PROHIBITIN"/>
</dbReference>
<dbReference type="SMART" id="SM00244">
    <property type="entry name" value="PHB"/>
    <property type="match status" value="1"/>
</dbReference>
<dbReference type="SUPFAM" id="SSF117892">
    <property type="entry name" value="Band 7/SPFH domain"/>
    <property type="match status" value="1"/>
</dbReference>